<name>HIS8_BUCCC</name>
<dbReference type="EC" id="2.6.1.9" evidence="1"/>
<dbReference type="EMBL" id="CP000263">
    <property type="protein sequence ID" value="ABJ90543.1"/>
    <property type="molecule type" value="Genomic_DNA"/>
</dbReference>
<dbReference type="RefSeq" id="WP_011672462.1">
    <property type="nucleotide sequence ID" value="NC_008513.1"/>
</dbReference>
<dbReference type="SMR" id="Q058A6"/>
<dbReference type="STRING" id="372461.BCc_065"/>
<dbReference type="KEGG" id="bcc:BCc_065"/>
<dbReference type="eggNOG" id="COG0079">
    <property type="taxonomic scope" value="Bacteria"/>
</dbReference>
<dbReference type="HOGENOM" id="CLU_017584_3_1_6"/>
<dbReference type="OrthoDB" id="9813612at2"/>
<dbReference type="UniPathway" id="UPA00031">
    <property type="reaction ID" value="UER00012"/>
</dbReference>
<dbReference type="Proteomes" id="UP000000669">
    <property type="component" value="Chromosome"/>
</dbReference>
<dbReference type="GO" id="GO:0004400">
    <property type="term" value="F:histidinol-phosphate transaminase activity"/>
    <property type="evidence" value="ECO:0007669"/>
    <property type="project" value="UniProtKB-UniRule"/>
</dbReference>
<dbReference type="GO" id="GO:0030170">
    <property type="term" value="F:pyridoxal phosphate binding"/>
    <property type="evidence" value="ECO:0007669"/>
    <property type="project" value="InterPro"/>
</dbReference>
<dbReference type="GO" id="GO:0000105">
    <property type="term" value="P:L-histidine biosynthetic process"/>
    <property type="evidence" value="ECO:0007669"/>
    <property type="project" value="UniProtKB-UniRule"/>
</dbReference>
<dbReference type="CDD" id="cd00609">
    <property type="entry name" value="AAT_like"/>
    <property type="match status" value="1"/>
</dbReference>
<dbReference type="Gene3D" id="3.90.1150.10">
    <property type="entry name" value="Aspartate Aminotransferase, domain 1"/>
    <property type="match status" value="1"/>
</dbReference>
<dbReference type="Gene3D" id="3.40.640.10">
    <property type="entry name" value="Type I PLP-dependent aspartate aminotransferase-like (Major domain)"/>
    <property type="match status" value="1"/>
</dbReference>
<dbReference type="HAMAP" id="MF_01023">
    <property type="entry name" value="HisC_aminotrans_2"/>
    <property type="match status" value="1"/>
</dbReference>
<dbReference type="InterPro" id="IPR001917">
    <property type="entry name" value="Aminotrans_II_pyridoxalP_BS"/>
</dbReference>
<dbReference type="InterPro" id="IPR004839">
    <property type="entry name" value="Aminotransferase_I/II_large"/>
</dbReference>
<dbReference type="InterPro" id="IPR005861">
    <property type="entry name" value="HisP_aminotrans"/>
</dbReference>
<dbReference type="InterPro" id="IPR015424">
    <property type="entry name" value="PyrdxlP-dep_Trfase"/>
</dbReference>
<dbReference type="InterPro" id="IPR015421">
    <property type="entry name" value="PyrdxlP-dep_Trfase_major"/>
</dbReference>
<dbReference type="InterPro" id="IPR015422">
    <property type="entry name" value="PyrdxlP-dep_Trfase_small"/>
</dbReference>
<dbReference type="NCBIfam" id="TIGR01141">
    <property type="entry name" value="hisC"/>
    <property type="match status" value="1"/>
</dbReference>
<dbReference type="PANTHER" id="PTHR42885:SF2">
    <property type="entry name" value="HISTIDINOL-PHOSPHATE AMINOTRANSFERASE"/>
    <property type="match status" value="1"/>
</dbReference>
<dbReference type="PANTHER" id="PTHR42885">
    <property type="entry name" value="HISTIDINOL-PHOSPHATE AMINOTRANSFERASE-RELATED"/>
    <property type="match status" value="1"/>
</dbReference>
<dbReference type="Pfam" id="PF00155">
    <property type="entry name" value="Aminotran_1_2"/>
    <property type="match status" value="1"/>
</dbReference>
<dbReference type="SUPFAM" id="SSF53383">
    <property type="entry name" value="PLP-dependent transferases"/>
    <property type="match status" value="1"/>
</dbReference>
<dbReference type="PROSITE" id="PS00599">
    <property type="entry name" value="AA_TRANSFER_CLASS_2"/>
    <property type="match status" value="1"/>
</dbReference>
<keyword id="KW-0028">Amino-acid biosynthesis</keyword>
<keyword id="KW-0032">Aminotransferase</keyword>
<keyword id="KW-0368">Histidine biosynthesis</keyword>
<keyword id="KW-0663">Pyridoxal phosphate</keyword>
<keyword id="KW-1185">Reference proteome</keyword>
<keyword id="KW-0808">Transferase</keyword>
<evidence type="ECO:0000255" key="1">
    <source>
        <dbReference type="HAMAP-Rule" id="MF_01023"/>
    </source>
</evidence>
<reference key="1">
    <citation type="journal article" date="2006" name="Science">
        <title>A small microbial genome: the end of a long symbiotic relationship?</title>
        <authorList>
            <person name="Perez-Brocal V."/>
            <person name="Gil R."/>
            <person name="Ramos S."/>
            <person name="Lamelas A."/>
            <person name="Postigo M."/>
            <person name="Michelena J.M."/>
            <person name="Silva F.J."/>
            <person name="Moya A."/>
            <person name="Latorre A."/>
        </authorList>
    </citation>
    <scope>NUCLEOTIDE SEQUENCE [LARGE SCALE GENOMIC DNA]</scope>
    <source>
        <strain>Cc</strain>
    </source>
</reference>
<sequence length="353" mass="40901">MKRLIPKHISILKPYQSARRIGIQGRIYLNANESPWINNIQYKFNNLNRYPEFQPYKLLKKYSLYSGVPINQILITRGADEGIEIITRTFCESNIDKIMFFPPTYDMYNVIANIFNIKKIIIPILSNFQLDIKNIKKKINNVKIIYICYPNNPTGNFFSRNKIIRIINSVSKTTLIVIDEAYIDFSIKYSFVSELNNFDNLIILRTLSKSFGLSAIRCGFVLSNVKIIKILKKVLAPYPISIPVSDIAIQSLCSQNIFLMQKNILRILKNKKFLIDQLKKISYIKNIFHSEANFILIKFAESKTIFKYLISKGIIVRDQSHNLGLKNCLRISIGTIHECQELINVLSIYKGKI</sequence>
<organism>
    <name type="scientific">Buchnera aphidicola subsp. Cinara cedri (strain Cc)</name>
    <dbReference type="NCBI Taxonomy" id="372461"/>
    <lineage>
        <taxon>Bacteria</taxon>
        <taxon>Pseudomonadati</taxon>
        <taxon>Pseudomonadota</taxon>
        <taxon>Gammaproteobacteria</taxon>
        <taxon>Enterobacterales</taxon>
        <taxon>Erwiniaceae</taxon>
        <taxon>Buchnera</taxon>
    </lineage>
</organism>
<comment type="catalytic activity">
    <reaction evidence="1">
        <text>L-histidinol phosphate + 2-oxoglutarate = 3-(imidazol-4-yl)-2-oxopropyl phosphate + L-glutamate</text>
        <dbReference type="Rhea" id="RHEA:23744"/>
        <dbReference type="ChEBI" id="CHEBI:16810"/>
        <dbReference type="ChEBI" id="CHEBI:29985"/>
        <dbReference type="ChEBI" id="CHEBI:57766"/>
        <dbReference type="ChEBI" id="CHEBI:57980"/>
        <dbReference type="EC" id="2.6.1.9"/>
    </reaction>
</comment>
<comment type="cofactor">
    <cofactor evidence="1">
        <name>pyridoxal 5'-phosphate</name>
        <dbReference type="ChEBI" id="CHEBI:597326"/>
    </cofactor>
</comment>
<comment type="pathway">
    <text evidence="1">Amino-acid biosynthesis; L-histidine biosynthesis; L-histidine from 5-phospho-alpha-D-ribose 1-diphosphate: step 7/9.</text>
</comment>
<comment type="subunit">
    <text evidence="1">Homodimer.</text>
</comment>
<comment type="similarity">
    <text evidence="1">Belongs to the class-II pyridoxal-phosphate-dependent aminotransferase family. Histidinol-phosphate aminotransferase subfamily.</text>
</comment>
<accession>Q058A6</accession>
<proteinExistence type="inferred from homology"/>
<gene>
    <name evidence="1" type="primary">hisC</name>
    <name type="ordered locus">BCc_065</name>
</gene>
<protein>
    <recommendedName>
        <fullName evidence="1">Histidinol-phosphate aminotransferase</fullName>
        <ecNumber evidence="1">2.6.1.9</ecNumber>
    </recommendedName>
    <alternativeName>
        <fullName evidence="1">Imidazole acetol-phosphate transaminase</fullName>
    </alternativeName>
</protein>
<feature type="chain" id="PRO_0000319746" description="Histidinol-phosphate aminotransferase">
    <location>
        <begin position="1"/>
        <end position="353"/>
    </location>
</feature>
<feature type="modified residue" description="N6-(pyridoxal phosphate)lysine" evidence="1">
    <location>
        <position position="209"/>
    </location>
</feature>